<sequence>MGRRPARCYRQIKGKPYPKSRYCRGVPDPKIRIYDVGMKRKGVDEFPFCVHLVSWEKENVSSEALEAARIACNKYMVKSAGKDAFHLRIRVHPFHVLRINKMLSCAGADRLQTGMRGAFGKALGTCARVAIGQVLLSVRCKDAHGHHAQEALRRAKFKFPGRQKIIVSRKWGFTKFNRADFTKLRQEKRVVPDGVNAKFLSCHGPLANRQPGSAFLPAHY</sequence>
<protein>
    <recommendedName>
        <fullName evidence="11">Large ribosomal subunit protein uL16z</fullName>
    </recommendedName>
    <alternativeName>
        <fullName evidence="9">60S ribosomal protein L10-1</fullName>
    </alternativeName>
    <alternativeName>
        <fullName evidence="9">Ribosomal protein RPL10A</fullName>
    </alternativeName>
    <alternativeName>
        <fullName evidence="10">Suppressor of ACAULIS 52</fullName>
    </alternativeName>
</protein>
<feature type="chain" id="PRO_0000239930" description="Large ribosomal subunit protein uL16z">
    <location>
        <begin position="1"/>
        <end position="220"/>
    </location>
</feature>
<feature type="splice variant" id="VSP_057660" description="In isoform 2.">
    <location>
        <begin position="77"/>
        <end position="133"/>
    </location>
</feature>
<feature type="mutagenesis site" description="In sac52-d; suppresses the dwarf phenotype of the acl5 mutant." evidence="2">
    <original>G</original>
    <variation>S</variation>
    <location>
        <position position="14"/>
    </location>
</feature>
<name>RL101_ARATH</name>
<accession>Q93VT9</accession>
<accession>F4HUJ2</accession>
<accession>Q93VL0</accession>
<comment type="function">
    <text evidence="2 3 4 5 7 8">Ribosomal protein involved in translational regulation (PubMed:18694459). Contribute to general translation under UV-B stress (PubMed:20516338, PubMed:23886624). Involved in the NIK1-mediated defense response to geminivirus infection (PubMed:18789471, PubMed:19112492). Acts coordinately with LIMYB as a transcriptional repressor (PubMed:25707794).</text>
</comment>
<comment type="subunit">
    <text evidence="1 3 4 5 8">Component of the small ribosomal subunit (PubMed:20516338). Mature ribosomes consist of a small (40S) and a large (60S) subunit. The 40S subunit contains about 33 different proteins and 1 molecule of RNA (18S). The 60S subunit contains about 49 different proteins and 3 molecules of RNA (25S, 5.8S and 5S) (By similarity). Interacts with NIK1 (PubMed:18789471, PubMed:19112492). Interacts with LIMYB (PubMed:25707794).</text>
</comment>
<comment type="interaction">
    <interactant intactId="EBI-6391356">
        <id>Q93VT9</id>
    </interactant>
    <interactant intactId="EBI-16146054">
        <id>Q9FFJ8</id>
        <label>LIMYB</label>
    </interactant>
    <organismsDiffer>false</organismsDiffer>
    <experiments>6</experiments>
</comment>
<comment type="subcellular location">
    <subcellularLocation>
        <location evidence="4 7">Cytoplasm</location>
    </subcellularLocation>
    <subcellularLocation>
        <location evidence="4 7">Nucleus</location>
    </subcellularLocation>
    <text evidence="4">Phosphorylation by NIK1 relocates the cytosolic protein to the nucleus.</text>
</comment>
<comment type="alternative products">
    <event type="alternative splicing"/>
    <isoform>
        <id>Q93VT9-1</id>
        <name>1</name>
        <sequence type="displayed"/>
    </isoform>
    <isoform>
        <id>Q93VT9-2</id>
        <name>2</name>
        <sequence type="described" ref="VSP_057660"/>
    </isoform>
</comment>
<comment type="tissue specificity">
    <text evidence="2 7 8">Ubiquitous, with the highest expression in flowers (PubMed:18694459). Expressed in seedlings, leaves, roots, stems and flowers (PubMed:25707794). Expressed in young leaves, mostly in dividing cells and in the hydathodes, in the root tips and lateral root primordia, in pistils, anthers, and pollen grains, and in developing seeds (PubMed:23886624).</text>
</comment>
<comment type="developmental stage">
    <text evidence="5">Expressed in tissues with active division, with the highest levels in 3-week-old leaves and lowest levels in senescent leaves.</text>
</comment>
<comment type="induction">
    <text evidence="5 6">Not regulated by UV-B.</text>
</comment>
<comment type="PTM">
    <text evidence="3 4">Phosphorylated by NIK1 and NIK2 in vitro.</text>
</comment>
<comment type="disruption phenotype">
    <text evidence="2 3 4 5">No visible phenotype, when heterozygous (PubMed:20516338). Lethality in the female gametophyte, when homozygous (PubMed:18694459, PubMed:20516338). Enhanced susceptibility to geminivirus infection (PubMed:18789471, PubMed:19112492).</text>
</comment>
<comment type="miscellaneous">
    <text evidence="6">Under UV-B conditions, RPL10 proteins interact with several nuclear proteins, including RBG7 (glycine-rich RNA binding protein), which has an important role in mediating innate immune response to pathogens, and BTR1 that specifically binds to tomato mosaic virus (ToMV) genomic RNA and inhibits the local spread of virus.</text>
</comment>
<comment type="similarity">
    <text evidence="12">Belongs to the universal ribosomal protein uL16 family.</text>
</comment>
<comment type="sequence caution" evidence="12">
    <conflict type="erroneous initiation">
        <sequence resource="EMBL-CDS" id="AAK55705"/>
    </conflict>
    <text>Truncated N-terminus.</text>
</comment>
<reference key="1">
    <citation type="journal article" date="2000" name="Nature">
        <title>Sequence and analysis of chromosome 1 of the plant Arabidopsis thaliana.</title>
        <authorList>
            <person name="Theologis A."/>
            <person name="Ecker J.R."/>
            <person name="Palm C.J."/>
            <person name="Federspiel N.A."/>
            <person name="Kaul S."/>
            <person name="White O."/>
            <person name="Alonso J."/>
            <person name="Altafi H."/>
            <person name="Araujo R."/>
            <person name="Bowman C.L."/>
            <person name="Brooks S.Y."/>
            <person name="Buehler E."/>
            <person name="Chan A."/>
            <person name="Chao Q."/>
            <person name="Chen H."/>
            <person name="Cheuk R.F."/>
            <person name="Chin C.W."/>
            <person name="Chung M.K."/>
            <person name="Conn L."/>
            <person name="Conway A.B."/>
            <person name="Conway A.R."/>
            <person name="Creasy T.H."/>
            <person name="Dewar K."/>
            <person name="Dunn P."/>
            <person name="Etgu P."/>
            <person name="Feldblyum T.V."/>
            <person name="Feng J.-D."/>
            <person name="Fong B."/>
            <person name="Fujii C.Y."/>
            <person name="Gill J.E."/>
            <person name="Goldsmith A.D."/>
            <person name="Haas B."/>
            <person name="Hansen N.F."/>
            <person name="Hughes B."/>
            <person name="Huizar L."/>
            <person name="Hunter J.L."/>
            <person name="Jenkins J."/>
            <person name="Johnson-Hopson C."/>
            <person name="Khan S."/>
            <person name="Khaykin E."/>
            <person name="Kim C.J."/>
            <person name="Koo H.L."/>
            <person name="Kremenetskaia I."/>
            <person name="Kurtz D.B."/>
            <person name="Kwan A."/>
            <person name="Lam B."/>
            <person name="Langin-Hooper S."/>
            <person name="Lee A."/>
            <person name="Lee J.M."/>
            <person name="Lenz C.A."/>
            <person name="Li J.H."/>
            <person name="Li Y.-P."/>
            <person name="Lin X."/>
            <person name="Liu S.X."/>
            <person name="Liu Z.A."/>
            <person name="Luros J.S."/>
            <person name="Maiti R."/>
            <person name="Marziali A."/>
            <person name="Militscher J."/>
            <person name="Miranda M."/>
            <person name="Nguyen M."/>
            <person name="Nierman W.C."/>
            <person name="Osborne B.I."/>
            <person name="Pai G."/>
            <person name="Peterson J."/>
            <person name="Pham P.K."/>
            <person name="Rizzo M."/>
            <person name="Rooney T."/>
            <person name="Rowley D."/>
            <person name="Sakano H."/>
            <person name="Salzberg S.L."/>
            <person name="Schwartz J.R."/>
            <person name="Shinn P."/>
            <person name="Southwick A.M."/>
            <person name="Sun H."/>
            <person name="Tallon L.J."/>
            <person name="Tambunga G."/>
            <person name="Toriumi M.J."/>
            <person name="Town C.D."/>
            <person name="Utterback T."/>
            <person name="Van Aken S."/>
            <person name="Vaysberg M."/>
            <person name="Vysotskaia V.S."/>
            <person name="Walker M."/>
            <person name="Wu D."/>
            <person name="Yu G."/>
            <person name="Fraser C.M."/>
            <person name="Venter J.C."/>
            <person name="Davis R.W."/>
        </authorList>
    </citation>
    <scope>NUCLEOTIDE SEQUENCE [LARGE SCALE GENOMIC DNA]</scope>
    <source>
        <strain>cv. Columbia</strain>
    </source>
</reference>
<reference key="2">
    <citation type="journal article" date="2017" name="Plant J.">
        <title>Araport11: a complete reannotation of the Arabidopsis thaliana reference genome.</title>
        <authorList>
            <person name="Cheng C.Y."/>
            <person name="Krishnakumar V."/>
            <person name="Chan A.P."/>
            <person name="Thibaud-Nissen F."/>
            <person name="Schobel S."/>
            <person name="Town C.D."/>
        </authorList>
    </citation>
    <scope>GENOME REANNOTATION</scope>
    <source>
        <strain>cv. Columbia</strain>
    </source>
</reference>
<reference key="3">
    <citation type="journal article" date="2003" name="Science">
        <title>Empirical analysis of transcriptional activity in the Arabidopsis genome.</title>
        <authorList>
            <person name="Yamada K."/>
            <person name="Lim J."/>
            <person name="Dale J.M."/>
            <person name="Chen H."/>
            <person name="Shinn P."/>
            <person name="Palm C.J."/>
            <person name="Southwick A.M."/>
            <person name="Wu H.C."/>
            <person name="Kim C.J."/>
            <person name="Nguyen M."/>
            <person name="Pham P.K."/>
            <person name="Cheuk R.F."/>
            <person name="Karlin-Newmann G."/>
            <person name="Liu S.X."/>
            <person name="Lam B."/>
            <person name="Sakano H."/>
            <person name="Wu T."/>
            <person name="Yu G."/>
            <person name="Miranda M."/>
            <person name="Quach H.L."/>
            <person name="Tripp M."/>
            <person name="Chang C.H."/>
            <person name="Lee J.M."/>
            <person name="Toriumi M.J."/>
            <person name="Chan M.M."/>
            <person name="Tang C.C."/>
            <person name="Onodera C.S."/>
            <person name="Deng J.M."/>
            <person name="Akiyama K."/>
            <person name="Ansari Y."/>
            <person name="Arakawa T."/>
            <person name="Banh J."/>
            <person name="Banno F."/>
            <person name="Bowser L."/>
            <person name="Brooks S.Y."/>
            <person name="Carninci P."/>
            <person name="Chao Q."/>
            <person name="Choy N."/>
            <person name="Enju A."/>
            <person name="Goldsmith A.D."/>
            <person name="Gurjal M."/>
            <person name="Hansen N.F."/>
            <person name="Hayashizaki Y."/>
            <person name="Johnson-Hopson C."/>
            <person name="Hsuan V.W."/>
            <person name="Iida K."/>
            <person name="Karnes M."/>
            <person name="Khan S."/>
            <person name="Koesema E."/>
            <person name="Ishida J."/>
            <person name="Jiang P.X."/>
            <person name="Jones T."/>
            <person name="Kawai J."/>
            <person name="Kamiya A."/>
            <person name="Meyers C."/>
            <person name="Nakajima M."/>
            <person name="Narusaka M."/>
            <person name="Seki M."/>
            <person name="Sakurai T."/>
            <person name="Satou M."/>
            <person name="Tamse R."/>
            <person name="Vaysberg M."/>
            <person name="Wallender E.K."/>
            <person name="Wong C."/>
            <person name="Yamamura Y."/>
            <person name="Yuan S."/>
            <person name="Shinozaki K."/>
            <person name="Davis R.W."/>
            <person name="Theologis A."/>
            <person name="Ecker J.R."/>
        </authorList>
    </citation>
    <scope>NUCLEOTIDE SEQUENCE [LARGE SCALE MRNA] (ISOFORM 1)</scope>
    <source>
        <strain>cv. Columbia</strain>
    </source>
</reference>
<reference key="4">
    <citation type="journal article" date="2001" name="Plant Physiol.">
        <title>The organization of cytoplasmic ribosomal protein genes in the Arabidopsis genome.</title>
        <authorList>
            <person name="Barakat A."/>
            <person name="Szick-Miranda K."/>
            <person name="Chang I.-F."/>
            <person name="Guyot R."/>
            <person name="Blanc G."/>
            <person name="Cooke R."/>
            <person name="Delseny M."/>
            <person name="Bailey-Serres J."/>
        </authorList>
    </citation>
    <scope>GENE FAMILY ORGANIZATION</scope>
    <scope>NOMENCLATURE</scope>
</reference>
<reference key="5">
    <citation type="journal article" date="2008" name="Plant J.">
        <title>A semi-dominant mutation in the ribosomal protein L10 gene suppresses the dwarf phenotype of the acl5 mutant in Arabidopsis thaliana.</title>
        <authorList>
            <person name="Imai A."/>
            <person name="Komura M."/>
            <person name="Kawano E."/>
            <person name="Kuwashiro Y."/>
            <person name="Takahashi T."/>
        </authorList>
    </citation>
    <scope>FUNCTION</scope>
    <scope>DISRUPTION PHENOTYPE</scope>
    <scope>MUTAGENESIS OF GLY-14</scope>
    <scope>TISSUE SPECIFICITY</scope>
</reference>
<reference key="6">
    <citation type="journal article" date="2008" name="PLoS Pathog.">
        <title>Regulated nuclear trafficking of rpL10A mediated by NIK1 represents a defense strategy of plant cells against virus.</title>
        <authorList>
            <person name="Carvalho C.M."/>
            <person name="Santos A.A."/>
            <person name="Pires S.R."/>
            <person name="Rocha C.S."/>
            <person name="Saraiva D.I."/>
            <person name="Machado J.P."/>
            <person name="Mattos E.C."/>
            <person name="Fietto L.G."/>
            <person name="Fontes E.P."/>
        </authorList>
    </citation>
    <scope>FUNCTION</scope>
    <scope>INTERACTION WITH NIK1</scope>
    <scope>SUBCELLULAR LOCATION</scope>
    <scope>PHOSPHORYLATION BY NIK1</scope>
    <scope>DISRUPTION PHENOTYPE</scope>
</reference>
<reference key="7">
    <citation type="journal article" date="2008" name="Virology">
        <title>The ribosomal protein L10/QM-like protein is a component of the NIK-mediated antiviral signaling.</title>
        <authorList>
            <person name="Rocha C.S."/>
            <person name="Santos A.A."/>
            <person name="Machado J.P."/>
            <person name="Fontes E.P."/>
        </authorList>
    </citation>
    <scope>FUNCTION</scope>
    <scope>INTERACTION WITH NIK1</scope>
    <scope>PHOSPHORYLATION BY NIK1 AND NIK2</scope>
    <scope>DISRUPTION PHENOTYPE</scope>
</reference>
<reference key="8">
    <citation type="journal article" date="2010" name="Plant Physiol.">
        <title>Plant L10 ribosomal proteins have different roles during development and translation under ultraviolet-B stress.</title>
        <authorList>
            <person name="Falcone Ferreyra M.L."/>
            <person name="Pezza A."/>
            <person name="Biarc J."/>
            <person name="Burlingame A.L."/>
            <person name="Casati P."/>
        </authorList>
    </citation>
    <scope>FUNCTION</scope>
    <scope>DEVELOPMENTAL STAGE</scope>
    <scope>IDENTIFICATION IN RIBOSOME</scope>
    <scope>DISRUPTION PHENOTYPE</scope>
    <scope>LACK OF INDUCTION BY UV-B</scope>
</reference>
<reference key="9">
    <citation type="journal article" date="2010" name="Plant Signal. Behav.">
        <title>Arabidopsis L10 ribosomal proteins in UV-B responses.</title>
        <authorList>
            <person name="Ferreyra M.L."/>
            <person name="Biarc J."/>
            <person name="Burlingame A.L."/>
            <person name="Casati P."/>
        </authorList>
    </citation>
    <scope>LACK OF INDUCTION BY UV-B</scope>
    <scope>MISCELLANEOUS</scope>
</reference>
<reference key="10">
    <citation type="journal article" date="2013" name="Plant Physiol.">
        <title>New evidence for differential roles of l10 ribosomal proteins from Arabidopsis.</title>
        <authorList>
            <person name="Falcone Ferreyra M.L."/>
            <person name="Casadevall R."/>
            <person name="Luciani M.D."/>
            <person name="Pezza A."/>
            <person name="Casati P."/>
        </authorList>
    </citation>
    <scope>FUNCTION</scope>
    <scope>TISSUE SPECIFICITY</scope>
    <scope>SUBCELLULAR LOCATION</scope>
</reference>
<reference key="11">
    <citation type="journal article" date="2015" name="Nature">
        <title>NIK1-mediated translation suppression functions as a plant antiviral immunity mechanism.</title>
        <authorList>
            <person name="Zorzatto C."/>
            <person name="Machado J.P."/>
            <person name="Lopes K.V."/>
            <person name="Nascimento K.J."/>
            <person name="Pereira W.A."/>
            <person name="Brustolini O.J."/>
            <person name="Reis P.A."/>
            <person name="Calil I.P."/>
            <person name="Deguchi M."/>
            <person name="Sachetto-Martins G."/>
            <person name="Gouveia B.C."/>
            <person name="Loriato V.A."/>
            <person name="Silva M.A."/>
            <person name="Silva F.F."/>
            <person name="Santos A.A."/>
            <person name="Chory J."/>
            <person name="Fontes E.P."/>
        </authorList>
    </citation>
    <scope>FUNCTION</scope>
    <scope>INTERACTION WITH LIMYB</scope>
    <scope>TISSUE SPECIFICITY</scope>
</reference>
<reference key="12">
    <citation type="journal article" date="2023" name="Plant Cell">
        <title>An updated nomenclature for plant ribosomal protein genes.</title>
        <authorList>
            <person name="Scarpin M.R."/>
            <person name="Busche M."/>
            <person name="Martinez R.E."/>
            <person name="Harper L.C."/>
            <person name="Reiser L."/>
            <person name="Szakonyi D."/>
            <person name="Merchante C."/>
            <person name="Lan T."/>
            <person name="Xiong W."/>
            <person name="Mo B."/>
            <person name="Tang G."/>
            <person name="Chen X."/>
            <person name="Bailey-Serres J."/>
            <person name="Browning K.S."/>
            <person name="Brunkard J.O."/>
        </authorList>
    </citation>
    <scope>NOMENCLATURE</scope>
</reference>
<proteinExistence type="evidence at protein level"/>
<keyword id="KW-0025">Alternative splicing</keyword>
<keyword id="KW-0963">Cytoplasm</keyword>
<keyword id="KW-0539">Nucleus</keyword>
<keyword id="KW-0597">Phosphoprotein</keyword>
<keyword id="KW-0611">Plant defense</keyword>
<keyword id="KW-1185">Reference proteome</keyword>
<keyword id="KW-0687">Ribonucleoprotein</keyword>
<keyword id="KW-0689">Ribosomal protein</keyword>
<dbReference type="EMBL" id="AC012188">
    <property type="protein sequence ID" value="AAF43932.1"/>
    <property type="molecule type" value="Genomic_DNA"/>
</dbReference>
<dbReference type="EMBL" id="CP002684">
    <property type="protein sequence ID" value="AEE29145.1"/>
    <property type="molecule type" value="Genomic_DNA"/>
</dbReference>
<dbReference type="EMBL" id="AF428286">
    <property type="protein sequence ID" value="AAL16118.1"/>
    <property type="molecule type" value="mRNA"/>
</dbReference>
<dbReference type="EMBL" id="AF428470">
    <property type="protein sequence ID" value="AAL16239.1"/>
    <property type="molecule type" value="mRNA"/>
</dbReference>
<dbReference type="EMBL" id="AY045866">
    <property type="protein sequence ID" value="AAK76540.1"/>
    <property type="molecule type" value="mRNA"/>
</dbReference>
<dbReference type="EMBL" id="AY113989">
    <property type="protein sequence ID" value="AAM45037.1"/>
    <property type="molecule type" value="mRNA"/>
</dbReference>
<dbReference type="EMBL" id="BT000679">
    <property type="protein sequence ID" value="AAN31825.1"/>
    <property type="molecule type" value="mRNA"/>
</dbReference>
<dbReference type="EMBL" id="AF378902">
    <property type="protein sequence ID" value="AAK55705.1"/>
    <property type="status" value="ALT_INIT"/>
    <property type="molecule type" value="mRNA"/>
</dbReference>
<dbReference type="EMBL" id="AY050482">
    <property type="protein sequence ID" value="AAK91495.1"/>
    <property type="molecule type" value="mRNA"/>
</dbReference>
<dbReference type="PIR" id="E86277">
    <property type="entry name" value="E86277"/>
</dbReference>
<dbReference type="RefSeq" id="NP_563945.2">
    <molecule id="Q93VT9-1"/>
    <property type="nucleotide sequence ID" value="NM_101298.3"/>
</dbReference>
<dbReference type="SMR" id="Q93VT9"/>
<dbReference type="BioGRID" id="23233">
    <property type="interactions" value="144"/>
</dbReference>
<dbReference type="DIP" id="DIP-61516N"/>
<dbReference type="FunCoup" id="Q93VT9">
    <property type="interactions" value="3081"/>
</dbReference>
<dbReference type="IntAct" id="Q93VT9">
    <property type="interactions" value="6"/>
</dbReference>
<dbReference type="STRING" id="3702.Q93VT9"/>
<dbReference type="MoonProt" id="Q93VT9"/>
<dbReference type="iPTMnet" id="Q93VT9"/>
<dbReference type="MetOSite" id="Q93VT9"/>
<dbReference type="PaxDb" id="3702-AT1G14320.1"/>
<dbReference type="EnsemblPlants" id="AT1G14320.1">
    <molecule id="Q93VT9-1"/>
    <property type="protein sequence ID" value="AT1G14320.1"/>
    <property type="gene ID" value="AT1G14320"/>
</dbReference>
<dbReference type="GeneID" id="837993"/>
<dbReference type="Gramene" id="AT1G14320.1">
    <molecule id="Q93VT9-1"/>
    <property type="protein sequence ID" value="AT1G14320.1"/>
    <property type="gene ID" value="AT1G14320"/>
</dbReference>
<dbReference type="KEGG" id="ath:AT1G14320"/>
<dbReference type="Araport" id="AT1G14320"/>
<dbReference type="TAIR" id="AT1G14320">
    <property type="gene designation" value="SAC52"/>
</dbReference>
<dbReference type="eggNOG" id="KOG0857">
    <property type="taxonomic scope" value="Eukaryota"/>
</dbReference>
<dbReference type="HOGENOM" id="CLU_084051_0_0_1"/>
<dbReference type="InParanoid" id="Q93VT9"/>
<dbReference type="OMA" id="GNHEIYR"/>
<dbReference type="OrthoDB" id="1024354at2759"/>
<dbReference type="PhylomeDB" id="Q93VT9"/>
<dbReference type="CD-CODE" id="4299E36E">
    <property type="entry name" value="Nucleolus"/>
</dbReference>
<dbReference type="PRO" id="PR:Q93VT9"/>
<dbReference type="Proteomes" id="UP000006548">
    <property type="component" value="Chromosome 1"/>
</dbReference>
<dbReference type="ExpressionAtlas" id="Q93VT9">
    <property type="expression patterns" value="baseline and differential"/>
</dbReference>
<dbReference type="GO" id="GO:0005737">
    <property type="term" value="C:cytoplasm"/>
    <property type="evidence" value="ECO:0000314"/>
    <property type="project" value="TAIR"/>
</dbReference>
<dbReference type="GO" id="GO:0022625">
    <property type="term" value="C:cytosolic large ribosomal subunit"/>
    <property type="evidence" value="ECO:0007005"/>
    <property type="project" value="TAIR"/>
</dbReference>
<dbReference type="GO" id="GO:0022626">
    <property type="term" value="C:cytosolic ribosome"/>
    <property type="evidence" value="ECO:0007005"/>
    <property type="project" value="TAIR"/>
</dbReference>
<dbReference type="GO" id="GO:0005576">
    <property type="term" value="C:extracellular region"/>
    <property type="evidence" value="ECO:0007005"/>
    <property type="project" value="TAIR"/>
</dbReference>
<dbReference type="GO" id="GO:0005730">
    <property type="term" value="C:nucleolus"/>
    <property type="evidence" value="ECO:0007005"/>
    <property type="project" value="TAIR"/>
</dbReference>
<dbReference type="GO" id="GO:0005634">
    <property type="term" value="C:nucleus"/>
    <property type="evidence" value="ECO:0000314"/>
    <property type="project" value="TAIR"/>
</dbReference>
<dbReference type="GO" id="GO:0000325">
    <property type="term" value="C:plant-type vacuole"/>
    <property type="evidence" value="ECO:0007005"/>
    <property type="project" value="TAIR"/>
</dbReference>
<dbReference type="GO" id="GO:0005840">
    <property type="term" value="C:ribosome"/>
    <property type="evidence" value="ECO:0000353"/>
    <property type="project" value="TAIR"/>
</dbReference>
<dbReference type="GO" id="GO:0005773">
    <property type="term" value="C:vacuole"/>
    <property type="evidence" value="ECO:0007005"/>
    <property type="project" value="TAIR"/>
</dbReference>
<dbReference type="GO" id="GO:0003729">
    <property type="term" value="F:mRNA binding"/>
    <property type="evidence" value="ECO:0000314"/>
    <property type="project" value="TAIR"/>
</dbReference>
<dbReference type="GO" id="GO:0003735">
    <property type="term" value="F:structural constituent of ribosome"/>
    <property type="evidence" value="ECO:0000314"/>
    <property type="project" value="CAFA"/>
</dbReference>
<dbReference type="GO" id="GO:0071493">
    <property type="term" value="P:cellular response to UV-B"/>
    <property type="evidence" value="ECO:0000315"/>
    <property type="project" value="TAIR"/>
</dbReference>
<dbReference type="GO" id="GO:0051607">
    <property type="term" value="P:defense response to virus"/>
    <property type="evidence" value="ECO:0000315"/>
    <property type="project" value="CAFA"/>
</dbReference>
<dbReference type="GO" id="GO:0032502">
    <property type="term" value="P:developmental process"/>
    <property type="evidence" value="ECO:0000315"/>
    <property type="project" value="TAIR"/>
</dbReference>
<dbReference type="GO" id="GO:0006412">
    <property type="term" value="P:translation"/>
    <property type="evidence" value="ECO:0000304"/>
    <property type="project" value="TAIR"/>
</dbReference>
<dbReference type="CDD" id="cd01433">
    <property type="entry name" value="Ribosomal_L16_L10e"/>
    <property type="match status" value="1"/>
</dbReference>
<dbReference type="FunFam" id="3.90.1170.10:FF:000002">
    <property type="entry name" value="60S ribosomal protein L10"/>
    <property type="match status" value="1"/>
</dbReference>
<dbReference type="Gene3D" id="3.90.1170.10">
    <property type="entry name" value="Ribosomal protein L10e/L16"/>
    <property type="match status" value="1"/>
</dbReference>
<dbReference type="InterPro" id="IPR047873">
    <property type="entry name" value="Ribosomal_uL16"/>
</dbReference>
<dbReference type="InterPro" id="IPR018255">
    <property type="entry name" value="Ribosomal_uL16_CS_euk_arc"/>
</dbReference>
<dbReference type="InterPro" id="IPR016180">
    <property type="entry name" value="Ribosomal_uL16_dom"/>
</dbReference>
<dbReference type="InterPro" id="IPR001197">
    <property type="entry name" value="Ribosomal_uL16_euk_arch"/>
</dbReference>
<dbReference type="InterPro" id="IPR036920">
    <property type="entry name" value="Ribosomal_uL16_sf"/>
</dbReference>
<dbReference type="NCBIfam" id="NF003239">
    <property type="entry name" value="PRK04199.1-4"/>
    <property type="match status" value="1"/>
</dbReference>
<dbReference type="NCBIfam" id="TIGR00279">
    <property type="entry name" value="uL16_euk_arch"/>
    <property type="match status" value="1"/>
</dbReference>
<dbReference type="PANTHER" id="PTHR11726">
    <property type="entry name" value="60S RIBOSOMAL PROTEIN L10"/>
    <property type="match status" value="1"/>
</dbReference>
<dbReference type="Pfam" id="PF00252">
    <property type="entry name" value="Ribosomal_L16"/>
    <property type="match status" value="1"/>
</dbReference>
<dbReference type="PIRSF" id="PIRSF005590">
    <property type="entry name" value="Ribosomal_L10"/>
    <property type="match status" value="1"/>
</dbReference>
<dbReference type="SUPFAM" id="SSF54686">
    <property type="entry name" value="Ribosomal protein L16p/L10e"/>
    <property type="match status" value="1"/>
</dbReference>
<dbReference type="PROSITE" id="PS01257">
    <property type="entry name" value="RIBOSOMAL_L10E"/>
    <property type="match status" value="1"/>
</dbReference>
<organism>
    <name type="scientific">Arabidopsis thaliana</name>
    <name type="common">Mouse-ear cress</name>
    <dbReference type="NCBI Taxonomy" id="3702"/>
    <lineage>
        <taxon>Eukaryota</taxon>
        <taxon>Viridiplantae</taxon>
        <taxon>Streptophyta</taxon>
        <taxon>Embryophyta</taxon>
        <taxon>Tracheophyta</taxon>
        <taxon>Spermatophyta</taxon>
        <taxon>Magnoliopsida</taxon>
        <taxon>eudicotyledons</taxon>
        <taxon>Gunneridae</taxon>
        <taxon>Pentapetalae</taxon>
        <taxon>rosids</taxon>
        <taxon>malvids</taxon>
        <taxon>Brassicales</taxon>
        <taxon>Brassicaceae</taxon>
        <taxon>Camelineae</taxon>
        <taxon>Arabidopsis</taxon>
    </lineage>
</organism>
<evidence type="ECO:0000250" key="1"/>
<evidence type="ECO:0000269" key="2">
    <source>
    </source>
</evidence>
<evidence type="ECO:0000269" key="3">
    <source>
    </source>
</evidence>
<evidence type="ECO:0000269" key="4">
    <source>
    </source>
</evidence>
<evidence type="ECO:0000269" key="5">
    <source>
    </source>
</evidence>
<evidence type="ECO:0000269" key="6">
    <source>
    </source>
</evidence>
<evidence type="ECO:0000269" key="7">
    <source>
    </source>
</evidence>
<evidence type="ECO:0000269" key="8">
    <source>
    </source>
</evidence>
<evidence type="ECO:0000303" key="9">
    <source>
    </source>
</evidence>
<evidence type="ECO:0000303" key="10">
    <source>
    </source>
</evidence>
<evidence type="ECO:0000303" key="11">
    <source>
    </source>
</evidence>
<evidence type="ECO:0000305" key="12"/>
<evidence type="ECO:0000312" key="13">
    <source>
        <dbReference type="Araport" id="AT1G14320"/>
    </source>
</evidence>
<evidence type="ECO:0000312" key="14">
    <source>
        <dbReference type="EMBL" id="AAF43932.1"/>
    </source>
</evidence>
<gene>
    <name evidence="9" type="primary">RPL10A</name>
    <name evidence="10" type="synonym">SAC52</name>
    <name evidence="13" type="ordered locus">At1g14320</name>
    <name evidence="14" type="ORF">F14L17.9</name>
</gene>